<dbReference type="EMBL" id="Z72843">
    <property type="protein sequence ID" value="CAA97059.1"/>
    <property type="molecule type" value="Genomic_DNA"/>
</dbReference>
<dbReference type="EMBL" id="BK006941">
    <property type="protein sequence ID" value="DAA08154.2"/>
    <property type="molecule type" value="Genomic_DNA"/>
</dbReference>
<dbReference type="PIR" id="S64352">
    <property type="entry name" value="S64352"/>
</dbReference>
<dbReference type="RefSeq" id="NP_011572.2">
    <property type="nucleotide sequence ID" value="NM_001181187.2"/>
</dbReference>
<dbReference type="SMR" id="P53238"/>
<dbReference type="BioGRID" id="33303">
    <property type="interactions" value="246"/>
</dbReference>
<dbReference type="DIP" id="DIP-1862N"/>
<dbReference type="FunCoup" id="P53238">
    <property type="interactions" value="65"/>
</dbReference>
<dbReference type="IntAct" id="P53238">
    <property type="interactions" value="8"/>
</dbReference>
<dbReference type="MINT" id="P53238"/>
<dbReference type="STRING" id="4932.YGR058W"/>
<dbReference type="iPTMnet" id="P53238"/>
<dbReference type="PaxDb" id="4932-YGR058W"/>
<dbReference type="PeptideAtlas" id="P53238"/>
<dbReference type="EnsemblFungi" id="YGR058W_mRNA">
    <property type="protein sequence ID" value="YGR058W"/>
    <property type="gene ID" value="YGR058W"/>
</dbReference>
<dbReference type="GeneID" id="852949"/>
<dbReference type="KEGG" id="sce:YGR058W"/>
<dbReference type="AGR" id="SGD:S000003290"/>
<dbReference type="SGD" id="S000003290">
    <property type="gene designation" value="PEF1"/>
</dbReference>
<dbReference type="VEuPathDB" id="FungiDB:YGR058W"/>
<dbReference type="eggNOG" id="KOG0037">
    <property type="taxonomic scope" value="Eukaryota"/>
</dbReference>
<dbReference type="HOGENOM" id="CLU_863808_0_0_1"/>
<dbReference type="InParanoid" id="P53238"/>
<dbReference type="OMA" id="YNKSYNP"/>
<dbReference type="OrthoDB" id="186625at2759"/>
<dbReference type="BioCyc" id="YEAST:G3O-30775-MONOMER"/>
<dbReference type="BioGRID-ORCS" id="852949">
    <property type="hits" value="9 hits in 10 CRISPR screens"/>
</dbReference>
<dbReference type="PRO" id="PR:P53238"/>
<dbReference type="Proteomes" id="UP000002311">
    <property type="component" value="Chromosome VII"/>
</dbReference>
<dbReference type="RNAct" id="P53238">
    <property type="molecule type" value="protein"/>
</dbReference>
<dbReference type="GO" id="GO:0005935">
    <property type="term" value="C:cellular bud neck"/>
    <property type="evidence" value="ECO:0000314"/>
    <property type="project" value="SGD"/>
</dbReference>
<dbReference type="GO" id="GO:0005934">
    <property type="term" value="C:cellular bud tip"/>
    <property type="evidence" value="ECO:0007669"/>
    <property type="project" value="UniProtKB-SubCell"/>
</dbReference>
<dbReference type="GO" id="GO:0005737">
    <property type="term" value="C:cytoplasm"/>
    <property type="evidence" value="ECO:0007005"/>
    <property type="project" value="SGD"/>
</dbReference>
<dbReference type="GO" id="GO:0005829">
    <property type="term" value="C:cytosol"/>
    <property type="evidence" value="ECO:0000314"/>
    <property type="project" value="SGD"/>
</dbReference>
<dbReference type="GO" id="GO:0005634">
    <property type="term" value="C:nucleus"/>
    <property type="evidence" value="ECO:0007005"/>
    <property type="project" value="SGD"/>
</dbReference>
<dbReference type="GO" id="GO:0030427">
    <property type="term" value="C:site of polarized growth"/>
    <property type="evidence" value="ECO:0000314"/>
    <property type="project" value="SGD"/>
</dbReference>
<dbReference type="GO" id="GO:0005509">
    <property type="term" value="F:calcium ion binding"/>
    <property type="evidence" value="ECO:0000314"/>
    <property type="project" value="SGD"/>
</dbReference>
<dbReference type="GO" id="GO:0008270">
    <property type="term" value="F:zinc ion binding"/>
    <property type="evidence" value="ECO:0000314"/>
    <property type="project" value="SGD"/>
</dbReference>
<dbReference type="GO" id="GO:0007120">
    <property type="term" value="P:axial cellular bud site selection"/>
    <property type="evidence" value="ECO:0000315"/>
    <property type="project" value="SGD"/>
</dbReference>
<dbReference type="GO" id="GO:0007121">
    <property type="term" value="P:bipolar cellular bud site selection"/>
    <property type="evidence" value="ECO:0000315"/>
    <property type="project" value="SGD"/>
</dbReference>
<dbReference type="GO" id="GO:0003400">
    <property type="term" value="P:regulation of COPII vesicle coating"/>
    <property type="evidence" value="ECO:0000314"/>
    <property type="project" value="SGD"/>
</dbReference>
<dbReference type="CDD" id="cd16180">
    <property type="entry name" value="EFh_PEF_Group_I"/>
    <property type="match status" value="1"/>
</dbReference>
<dbReference type="FunFam" id="1.10.238.10:FF:000454">
    <property type="entry name" value="Pef1p"/>
    <property type="match status" value="1"/>
</dbReference>
<dbReference type="Gene3D" id="1.10.238.10">
    <property type="entry name" value="EF-hand"/>
    <property type="match status" value="1"/>
</dbReference>
<dbReference type="InterPro" id="IPR011992">
    <property type="entry name" value="EF-hand-dom_pair"/>
</dbReference>
<dbReference type="InterPro" id="IPR002048">
    <property type="entry name" value="EF_hand_dom"/>
</dbReference>
<dbReference type="InterPro" id="IPR051426">
    <property type="entry name" value="Peflin/Sorcin_CaBP"/>
</dbReference>
<dbReference type="PANTHER" id="PTHR46212:SF3">
    <property type="entry name" value="GH27120P"/>
    <property type="match status" value="1"/>
</dbReference>
<dbReference type="PANTHER" id="PTHR46212">
    <property type="entry name" value="PEFLIN"/>
    <property type="match status" value="1"/>
</dbReference>
<dbReference type="Pfam" id="PF13499">
    <property type="entry name" value="EF-hand_7"/>
    <property type="match status" value="1"/>
</dbReference>
<dbReference type="SUPFAM" id="SSF47473">
    <property type="entry name" value="EF-hand"/>
    <property type="match status" value="1"/>
</dbReference>
<dbReference type="PROSITE" id="PS50222">
    <property type="entry name" value="EF_HAND_2"/>
    <property type="match status" value="3"/>
</dbReference>
<comment type="function">
    <text evidence="4">Calcium-binding protein that is required for polar bud growth and cell wall abscission. Can also bind zinc ions.</text>
</comment>
<comment type="subunit">
    <text evidence="4">Homodimer.</text>
</comment>
<comment type="subcellular location">
    <subcellularLocation>
        <location evidence="4">Cytoplasm</location>
    </subcellularLocation>
    <subcellularLocation>
        <location evidence="4">Nucleus</location>
    </subcellularLocation>
    <subcellularLocation>
        <location evidence="4">Bud tip</location>
    </subcellularLocation>
    <subcellularLocation>
        <location evidence="4">Bud neck</location>
    </subcellularLocation>
    <text evidence="4">Accumulates at the site of bud emergence in G1 cells. In small budded G1 cells, localizes asymmetrically on the tip of the daughter cell and in the nucleus. At a later stage of the G1 phase, is found at the emerging bud cortex and localizes in the nucleus. In large budded G2/M cells, localizes preferentially at the bud neck between the dividing mother and daughter cells, with very weak signals in the nucleus.</text>
</comment>
<comment type="domain">
    <text evidence="6">Binds calcium via its EF-hands.</text>
</comment>
<comment type="miscellaneous">
    <text evidence="3">Present with 1630 molecules/cell in log phase SD medium.</text>
</comment>
<name>PEF1_YEAST</name>
<feature type="chain" id="PRO_0000073720" description="Peflin">
    <location>
        <begin position="1"/>
        <end position="335"/>
    </location>
</feature>
<feature type="domain" description="EF-hand 1" evidence="1">
    <location>
        <begin position="144"/>
        <end position="192"/>
    </location>
</feature>
<feature type="domain" description="EF-hand 2" evidence="5">
    <location>
        <begin position="198"/>
        <end position="223"/>
    </location>
</feature>
<feature type="domain" description="EF-hand 3" evidence="1">
    <location>
        <begin position="224"/>
        <end position="259"/>
    </location>
</feature>
<feature type="domain" description="EF-hand 4" evidence="5">
    <location>
        <begin position="260"/>
        <end position="300"/>
    </location>
</feature>
<feature type="domain" description="EF-hand 5" evidence="1">
    <location>
        <begin position="301"/>
        <end position="332"/>
    </location>
</feature>
<feature type="region of interest" description="Disordered" evidence="2">
    <location>
        <begin position="23"/>
        <end position="92"/>
    </location>
</feature>
<feature type="compositionally biased region" description="Basic and acidic residues" evidence="2">
    <location>
        <begin position="23"/>
        <end position="37"/>
    </location>
</feature>
<feature type="compositionally biased region" description="Polar residues" evidence="2">
    <location>
        <begin position="43"/>
        <end position="53"/>
    </location>
</feature>
<feature type="binding site" evidence="5">
    <location>
        <position position="170"/>
    </location>
    <ligand>
        <name>Ca(2+)</name>
        <dbReference type="ChEBI" id="CHEBI:29108"/>
        <label>1</label>
    </ligand>
</feature>
<feature type="binding site" evidence="5">
    <location>
        <position position="176"/>
    </location>
    <ligand>
        <name>Ca(2+)</name>
        <dbReference type="ChEBI" id="CHEBI:29108"/>
        <label>1</label>
    </ligand>
</feature>
<feature type="binding site" evidence="5">
    <location>
        <position position="181"/>
    </location>
    <ligand>
        <name>Ca(2+)</name>
        <dbReference type="ChEBI" id="CHEBI:29108"/>
        <label>1</label>
    </ligand>
</feature>
<feature type="binding site" evidence="5">
    <location>
        <position position="237"/>
    </location>
    <ligand>
        <name>Ca(2+)</name>
        <dbReference type="ChEBI" id="CHEBI:29108"/>
        <label>2</label>
    </ligand>
</feature>
<feature type="binding site" evidence="5">
    <location>
        <position position="239"/>
    </location>
    <ligand>
        <name>Ca(2+)</name>
        <dbReference type="ChEBI" id="CHEBI:29108"/>
        <label>2</label>
    </ligand>
</feature>
<feature type="binding site" evidence="5">
    <location>
        <position position="241"/>
    </location>
    <ligand>
        <name>Ca(2+)</name>
        <dbReference type="ChEBI" id="CHEBI:29108"/>
        <label>2</label>
    </ligand>
</feature>
<feature type="binding site" evidence="5">
    <location>
        <position position="243"/>
    </location>
    <ligand>
        <name>Ca(2+)</name>
        <dbReference type="ChEBI" id="CHEBI:29108"/>
        <label>2</label>
    </ligand>
</feature>
<feature type="binding site" evidence="5">
    <location>
        <position position="248"/>
    </location>
    <ligand>
        <name>Ca(2+)</name>
        <dbReference type="ChEBI" id="CHEBI:29108"/>
        <label>2</label>
    </ligand>
</feature>
<feature type="mutagenesis site" description="Induces EGTA and SDS sensitivity." evidence="4">
    <original>E</original>
    <variation>A</variation>
    <location>
        <position position="218"/>
    </location>
</feature>
<feature type="sequence conflict" description="In Ref. 1; CAA97059." evidence="5" ref="1">
    <original>D</original>
    <variation>Y</variation>
    <location>
        <position position="324"/>
    </location>
</feature>
<organism>
    <name type="scientific">Saccharomyces cerevisiae (strain ATCC 204508 / S288c)</name>
    <name type="common">Baker's yeast</name>
    <dbReference type="NCBI Taxonomy" id="559292"/>
    <lineage>
        <taxon>Eukaryota</taxon>
        <taxon>Fungi</taxon>
        <taxon>Dikarya</taxon>
        <taxon>Ascomycota</taxon>
        <taxon>Saccharomycotina</taxon>
        <taxon>Saccharomycetes</taxon>
        <taxon>Saccharomycetales</taxon>
        <taxon>Saccharomycetaceae</taxon>
        <taxon>Saccharomyces</taxon>
    </lineage>
</organism>
<gene>
    <name type="primary">PEF1</name>
    <name type="ordered locus">YGR058W</name>
</gene>
<proteinExistence type="evidence at protein level"/>
<sequence length="335" mass="38342">MCAKKLKYAAGDDFVRYATPKEAMEETRREFEKEKQRQQQIKVTQAQTPNTRVHSAPIPLQTQYNKNRAENGHHSYGSPQSYSPRHTKTPVDPRYNVIAQKPAGRPIPPAPTHYNNLNTSAQRIASSPPPLIHNQAVPAQLLKKVAPASFDSREDVRDMQVATQLFHNHDVKGKNRLTAEELQNLLQNDDNSHFCISSVDALINLFGASRFGTVNQAEFIALYKRVKSWRKVYVDNDINGSLTISVSEFHNSLQELGYLIPFEVSEKTFDQYAEFINRNGTGKELKFDKFVEALVWLMRLTKLFRKFDTNQEGIATIQYKDFIDATLYLGRFLPH</sequence>
<evidence type="ECO:0000255" key="1">
    <source>
        <dbReference type="PROSITE-ProRule" id="PRU00448"/>
    </source>
</evidence>
<evidence type="ECO:0000256" key="2">
    <source>
        <dbReference type="SAM" id="MobiDB-lite"/>
    </source>
</evidence>
<evidence type="ECO:0000269" key="3">
    <source>
    </source>
</evidence>
<evidence type="ECO:0000269" key="4">
    <source>
    </source>
</evidence>
<evidence type="ECO:0000305" key="5"/>
<evidence type="ECO:0000305" key="6">
    <source>
    </source>
</evidence>
<reference key="1">
    <citation type="journal article" date="1997" name="Nature">
        <title>The nucleotide sequence of Saccharomyces cerevisiae chromosome VII.</title>
        <authorList>
            <person name="Tettelin H."/>
            <person name="Agostoni-Carbone M.L."/>
            <person name="Albermann K."/>
            <person name="Albers M."/>
            <person name="Arroyo J."/>
            <person name="Backes U."/>
            <person name="Barreiros T."/>
            <person name="Bertani I."/>
            <person name="Bjourson A.J."/>
            <person name="Brueckner M."/>
            <person name="Bruschi C.V."/>
            <person name="Carignani G."/>
            <person name="Castagnoli L."/>
            <person name="Cerdan E."/>
            <person name="Clemente M.L."/>
            <person name="Coblenz A."/>
            <person name="Coglievina M."/>
            <person name="Coissac E."/>
            <person name="Defoor E."/>
            <person name="Del Bino S."/>
            <person name="Delius H."/>
            <person name="Delneri D."/>
            <person name="de Wergifosse P."/>
            <person name="Dujon B."/>
            <person name="Durand P."/>
            <person name="Entian K.-D."/>
            <person name="Eraso P."/>
            <person name="Escribano V."/>
            <person name="Fabiani L."/>
            <person name="Fartmann B."/>
            <person name="Feroli F."/>
            <person name="Feuermann M."/>
            <person name="Frontali L."/>
            <person name="Garcia-Gonzalez M."/>
            <person name="Garcia-Saez M.I."/>
            <person name="Goffeau A."/>
            <person name="Guerreiro P."/>
            <person name="Hani J."/>
            <person name="Hansen M."/>
            <person name="Hebling U."/>
            <person name="Hernandez K."/>
            <person name="Heumann K."/>
            <person name="Hilger F."/>
            <person name="Hofmann B."/>
            <person name="Indge K.J."/>
            <person name="James C.M."/>
            <person name="Klima R."/>
            <person name="Koetter P."/>
            <person name="Kramer B."/>
            <person name="Kramer W."/>
            <person name="Lauquin G."/>
            <person name="Leuther H."/>
            <person name="Louis E.J."/>
            <person name="Maillier E."/>
            <person name="Marconi A."/>
            <person name="Martegani E."/>
            <person name="Mazon M.J."/>
            <person name="Mazzoni C."/>
            <person name="McReynolds A.D.K."/>
            <person name="Melchioretto P."/>
            <person name="Mewes H.-W."/>
            <person name="Minenkova O."/>
            <person name="Mueller-Auer S."/>
            <person name="Nawrocki A."/>
            <person name="Netter P."/>
            <person name="Neu R."/>
            <person name="Nombela C."/>
            <person name="Oliver S.G."/>
            <person name="Panzeri L."/>
            <person name="Paoluzi S."/>
            <person name="Plevani P."/>
            <person name="Portetelle D."/>
            <person name="Portillo F."/>
            <person name="Potier S."/>
            <person name="Purnelle B."/>
            <person name="Rieger M."/>
            <person name="Riles L."/>
            <person name="Rinaldi T."/>
            <person name="Robben J."/>
            <person name="Rodrigues-Pousada C."/>
            <person name="Rodriguez-Belmonte E."/>
            <person name="Rodriguez-Torres A.M."/>
            <person name="Rose M."/>
            <person name="Ruzzi M."/>
            <person name="Saliola M."/>
            <person name="Sanchez-Perez M."/>
            <person name="Schaefer B."/>
            <person name="Schaefer M."/>
            <person name="Scharfe M."/>
            <person name="Schmidheini T."/>
            <person name="Schreer A."/>
            <person name="Skala J."/>
            <person name="Souciet J.-L."/>
            <person name="Steensma H.Y."/>
            <person name="Talla E."/>
            <person name="Thierry A."/>
            <person name="Vandenbol M."/>
            <person name="van der Aart Q.J.M."/>
            <person name="Van Dyck L."/>
            <person name="Vanoni M."/>
            <person name="Verhasselt P."/>
            <person name="Voet M."/>
            <person name="Volckaert G."/>
            <person name="Wambutt R."/>
            <person name="Watson M.D."/>
            <person name="Weber N."/>
            <person name="Wedler E."/>
            <person name="Wedler H."/>
            <person name="Wipfli P."/>
            <person name="Wolf K."/>
            <person name="Wright L.F."/>
            <person name="Zaccaria P."/>
            <person name="Zimmermann M."/>
            <person name="Zollner A."/>
            <person name="Kleine K."/>
        </authorList>
    </citation>
    <scope>NUCLEOTIDE SEQUENCE [LARGE SCALE GENOMIC DNA]</scope>
    <source>
        <strain>ATCC 204508 / S288c</strain>
    </source>
</reference>
<reference key="2">
    <citation type="journal article" date="2014" name="G3 (Bethesda)">
        <title>The reference genome sequence of Saccharomyces cerevisiae: Then and now.</title>
        <authorList>
            <person name="Engel S.R."/>
            <person name="Dietrich F.S."/>
            <person name="Fisk D.G."/>
            <person name="Binkley G."/>
            <person name="Balakrishnan R."/>
            <person name="Costanzo M.C."/>
            <person name="Dwight S.S."/>
            <person name="Hitz B.C."/>
            <person name="Karra K."/>
            <person name="Nash R.S."/>
            <person name="Weng S."/>
            <person name="Wong E.D."/>
            <person name="Lloyd P."/>
            <person name="Skrzypek M.S."/>
            <person name="Miyasato S.R."/>
            <person name="Simison M."/>
            <person name="Cherry J.M."/>
        </authorList>
    </citation>
    <scope>GENOME REANNOTATION</scope>
    <scope>SEQUENCE REVISION TO 324</scope>
    <source>
        <strain>ATCC 204508 / S288c</strain>
    </source>
</reference>
<reference key="3">
    <citation type="journal article" date="2003" name="Nature">
        <title>Global analysis of protein localization in budding yeast.</title>
        <authorList>
            <person name="Huh W.-K."/>
            <person name="Falvo J.V."/>
            <person name="Gerke L.C."/>
            <person name="Carroll A.S."/>
            <person name="Howson R.W."/>
            <person name="Weissman J.S."/>
            <person name="O'Shea E.K."/>
        </authorList>
    </citation>
    <scope>SUBCELLULAR LOCATION [LARGE SCALE ANALYSIS]</scope>
</reference>
<reference key="4">
    <citation type="journal article" date="2003" name="Nature">
        <title>Global analysis of protein expression in yeast.</title>
        <authorList>
            <person name="Ghaemmaghami S."/>
            <person name="Huh W.-K."/>
            <person name="Bower K."/>
            <person name="Howson R.W."/>
            <person name="Belle A."/>
            <person name="Dephoure N."/>
            <person name="O'Shea E.K."/>
            <person name="Weissman J.S."/>
        </authorList>
    </citation>
    <scope>LEVEL OF PROTEIN EXPRESSION [LARGE SCALE ANALYSIS]</scope>
</reference>
<reference key="5">
    <citation type="journal article" date="2007" name="Mol. Microbiol.">
        <title>The yeast penta-EF protein Pef1p is involved in cation-dependent budding and cell polarization.</title>
        <authorList>
            <person name="Vernarecci S."/>
            <person name="Colotti G."/>
            <person name="Ornaghi P."/>
            <person name="Schiebel E."/>
            <person name="Chiancone E."/>
            <person name="Filetici P."/>
        </authorList>
    </citation>
    <scope>FUNCTION</scope>
    <scope>SUBCELLULAR LOCATION</scope>
    <scope>SUBUNIT</scope>
    <scope>DOMAIN</scope>
    <scope>MUTAGENESIS OF GLU-218</scope>
</reference>
<protein>
    <recommendedName>
        <fullName>Peflin</fullName>
    </recommendedName>
    <alternativeName>
        <fullName>Penta-EF hand domain-containing protein 1</fullName>
    </alternativeName>
</protein>
<keyword id="KW-0106">Calcium</keyword>
<keyword id="KW-0963">Cytoplasm</keyword>
<keyword id="KW-0479">Metal-binding</keyword>
<keyword id="KW-0539">Nucleus</keyword>
<keyword id="KW-1185">Reference proteome</keyword>
<keyword id="KW-0677">Repeat</keyword>
<accession>P53238</accession>
<accession>D6VUJ3</accession>